<proteinExistence type="predicted"/>
<dbReference type="EMBL" id="L77117">
    <property type="protein sequence ID" value="AAB98811.1"/>
    <property type="molecule type" value="Genomic_DNA"/>
</dbReference>
<dbReference type="PIR" id="D64401">
    <property type="entry name" value="D64401"/>
</dbReference>
<dbReference type="RefSeq" id="WP_010870323.1">
    <property type="nucleotide sequence ID" value="NC_000909.1"/>
</dbReference>
<dbReference type="SMR" id="Q58222"/>
<dbReference type="FunCoup" id="Q58222">
    <property type="interactions" value="2"/>
</dbReference>
<dbReference type="STRING" id="243232.MJ_0812"/>
<dbReference type="PaxDb" id="243232-MJ_0812"/>
<dbReference type="EnsemblBacteria" id="AAB98811">
    <property type="protein sequence ID" value="AAB98811"/>
    <property type="gene ID" value="MJ_0812"/>
</dbReference>
<dbReference type="GeneID" id="1451695"/>
<dbReference type="KEGG" id="mja:MJ_0812"/>
<dbReference type="eggNOG" id="arCOG00436">
    <property type="taxonomic scope" value="Archaea"/>
</dbReference>
<dbReference type="HOGENOM" id="CLU_018678_0_1_2"/>
<dbReference type="InParanoid" id="Q58222"/>
<dbReference type="OrthoDB" id="9837at2157"/>
<dbReference type="PhylomeDB" id="Q58222"/>
<dbReference type="Proteomes" id="UP000000805">
    <property type="component" value="Chromosome"/>
</dbReference>
<dbReference type="GO" id="GO:0005524">
    <property type="term" value="F:ATP binding"/>
    <property type="evidence" value="ECO:0007669"/>
    <property type="project" value="InterPro"/>
</dbReference>
<dbReference type="GO" id="GO:0016887">
    <property type="term" value="F:ATP hydrolysis activity"/>
    <property type="evidence" value="ECO:0000318"/>
    <property type="project" value="GO_Central"/>
</dbReference>
<dbReference type="Gene3D" id="3.40.50.300">
    <property type="entry name" value="P-loop containing nucleotide triphosphate hydrolases"/>
    <property type="match status" value="1"/>
</dbReference>
<dbReference type="InterPro" id="IPR003593">
    <property type="entry name" value="AAA+_ATPase"/>
</dbReference>
<dbReference type="InterPro" id="IPR001270">
    <property type="entry name" value="ClpA/B"/>
</dbReference>
<dbReference type="InterPro" id="IPR045427">
    <property type="entry name" value="MoxR"/>
</dbReference>
<dbReference type="InterPro" id="IPR027417">
    <property type="entry name" value="P-loop_NTPase"/>
</dbReference>
<dbReference type="InterPro" id="IPR041538">
    <property type="entry name" value="RavA-like_AAA_lid"/>
</dbReference>
<dbReference type="InterPro" id="IPR050513">
    <property type="entry name" value="RavA_ATPases"/>
</dbReference>
<dbReference type="PANTHER" id="PTHR32204">
    <property type="entry name" value="ATPASE RAVA"/>
    <property type="match status" value="1"/>
</dbReference>
<dbReference type="PANTHER" id="PTHR32204:SF0">
    <property type="entry name" value="ATPASE RAVA"/>
    <property type="match status" value="1"/>
</dbReference>
<dbReference type="Pfam" id="PF17868">
    <property type="entry name" value="AAA_lid_8"/>
    <property type="match status" value="1"/>
</dbReference>
<dbReference type="Pfam" id="PF20030">
    <property type="entry name" value="bpMoxR"/>
    <property type="match status" value="1"/>
</dbReference>
<dbReference type="PRINTS" id="PR00300">
    <property type="entry name" value="CLPPROTEASEA"/>
</dbReference>
<dbReference type="SMART" id="SM00382">
    <property type="entry name" value="AAA"/>
    <property type="match status" value="1"/>
</dbReference>
<dbReference type="SUPFAM" id="SSF52540">
    <property type="entry name" value="P-loop containing nucleoside triphosphate hydrolases"/>
    <property type="match status" value="1"/>
</dbReference>
<gene>
    <name type="ordered locus">MJ0812</name>
</gene>
<accession>Q58222</accession>
<reference key="1">
    <citation type="journal article" date="1996" name="Science">
        <title>Complete genome sequence of the methanogenic archaeon, Methanococcus jannaschii.</title>
        <authorList>
            <person name="Bult C.J."/>
            <person name="White O."/>
            <person name="Olsen G.J."/>
            <person name="Zhou L."/>
            <person name="Fleischmann R.D."/>
            <person name="Sutton G.G."/>
            <person name="Blake J.A."/>
            <person name="FitzGerald L.M."/>
            <person name="Clayton R.A."/>
            <person name="Gocayne J.D."/>
            <person name="Kerlavage A.R."/>
            <person name="Dougherty B.A."/>
            <person name="Tomb J.-F."/>
            <person name="Adams M.D."/>
            <person name="Reich C.I."/>
            <person name="Overbeek R."/>
            <person name="Kirkness E.F."/>
            <person name="Weinstock K.G."/>
            <person name="Merrick J.M."/>
            <person name="Glodek A."/>
            <person name="Scott J.L."/>
            <person name="Geoghagen N.S.M."/>
            <person name="Weidman J.F."/>
            <person name="Fuhrmann J.L."/>
            <person name="Nguyen D."/>
            <person name="Utterback T.R."/>
            <person name="Kelley J.M."/>
            <person name="Peterson J.D."/>
            <person name="Sadow P.W."/>
            <person name="Hanna M.C."/>
            <person name="Cotton M.D."/>
            <person name="Roberts K.M."/>
            <person name="Hurst M.A."/>
            <person name="Kaine B.P."/>
            <person name="Borodovsky M."/>
            <person name="Klenk H.-P."/>
            <person name="Fraser C.M."/>
            <person name="Smith H.O."/>
            <person name="Woese C.R."/>
            <person name="Venter J.C."/>
        </authorList>
    </citation>
    <scope>NUCLEOTIDE SEQUENCE [LARGE SCALE GENOMIC DNA]</scope>
    <source>
        <strain>ATCC 43067 / DSM 2661 / JAL-1 / JCM 10045 / NBRC 100440</strain>
    </source>
</reference>
<protein>
    <recommendedName>
        <fullName>Uncharacterized protein MJ0812</fullName>
    </recommendedName>
</protein>
<feature type="chain" id="PRO_0000107060" description="Uncharacterized protein MJ0812">
    <location>
        <begin position="1"/>
        <end position="373"/>
    </location>
</feature>
<keyword id="KW-1185">Reference proteome</keyword>
<sequence length="373" mass="43183">MLEKIREELNSYFLERREEIDIALTSILANEHTVFLGNPGVAKSQLIRAIASHINANYFEKLITRFTTEDELFGPLSIKELKDNDRFVRKTSGYLPTAEIAFLDEVFKANSSILNALLSIINERIYHNGDRIEKVPLISLFGASNELPEENELLAFYDRFLFRKVVRGIRSYENLSKLIDLEEEYKPKTIIDVEDVKKMQNEALKVDISNIKDDLIKIKLSLESEGIRISDRRFKKSVKAVKCFAYLNGKEKADENDLDILRHIYWNEPDEFYKVSVEIFKISNHFAGFALEQREILDSLMNEIKKINKDRIKLGGIEYRKCLEILGKLNSMSITLKDVKNKAIEANKPYELVEDVLKEVEGFKKYVEGLLKG</sequence>
<name>Y812_METJA</name>
<organism>
    <name type="scientific">Methanocaldococcus jannaschii (strain ATCC 43067 / DSM 2661 / JAL-1 / JCM 10045 / NBRC 100440)</name>
    <name type="common">Methanococcus jannaschii</name>
    <dbReference type="NCBI Taxonomy" id="243232"/>
    <lineage>
        <taxon>Archaea</taxon>
        <taxon>Methanobacteriati</taxon>
        <taxon>Methanobacteriota</taxon>
        <taxon>Methanomada group</taxon>
        <taxon>Methanococci</taxon>
        <taxon>Methanococcales</taxon>
        <taxon>Methanocaldococcaceae</taxon>
        <taxon>Methanocaldococcus</taxon>
    </lineage>
</organism>